<evidence type="ECO:0000255" key="1">
    <source>
        <dbReference type="HAMAP-Rule" id="MF_00196"/>
    </source>
</evidence>
<gene>
    <name evidence="1" type="primary">mtlD</name>
    <name type="ordered locus">E2348C_3846</name>
</gene>
<proteinExistence type="inferred from homology"/>
<protein>
    <recommendedName>
        <fullName evidence="1">Mannitol-1-phosphate 5-dehydrogenase</fullName>
        <ecNumber evidence="1">1.1.1.17</ecNumber>
    </recommendedName>
</protein>
<keyword id="KW-0007">Acetylation</keyword>
<keyword id="KW-0520">NAD</keyword>
<keyword id="KW-0560">Oxidoreductase</keyword>
<keyword id="KW-1185">Reference proteome</keyword>
<organism>
    <name type="scientific">Escherichia coli O127:H6 (strain E2348/69 / EPEC)</name>
    <dbReference type="NCBI Taxonomy" id="574521"/>
    <lineage>
        <taxon>Bacteria</taxon>
        <taxon>Pseudomonadati</taxon>
        <taxon>Pseudomonadota</taxon>
        <taxon>Gammaproteobacteria</taxon>
        <taxon>Enterobacterales</taxon>
        <taxon>Enterobacteriaceae</taxon>
        <taxon>Escherichia</taxon>
    </lineage>
</organism>
<comment type="catalytic activity">
    <reaction evidence="1">
        <text>D-mannitol 1-phosphate + NAD(+) = beta-D-fructose 6-phosphate + NADH + H(+)</text>
        <dbReference type="Rhea" id="RHEA:19661"/>
        <dbReference type="ChEBI" id="CHEBI:15378"/>
        <dbReference type="ChEBI" id="CHEBI:57540"/>
        <dbReference type="ChEBI" id="CHEBI:57634"/>
        <dbReference type="ChEBI" id="CHEBI:57945"/>
        <dbReference type="ChEBI" id="CHEBI:61381"/>
        <dbReference type="EC" id="1.1.1.17"/>
    </reaction>
</comment>
<comment type="similarity">
    <text evidence="1">Belongs to the mannitol dehydrogenase family.</text>
</comment>
<accession>B7ULF5</accession>
<reference key="1">
    <citation type="journal article" date="2009" name="J. Bacteriol.">
        <title>Complete genome sequence and comparative genome analysis of enteropathogenic Escherichia coli O127:H6 strain E2348/69.</title>
        <authorList>
            <person name="Iguchi A."/>
            <person name="Thomson N.R."/>
            <person name="Ogura Y."/>
            <person name="Saunders D."/>
            <person name="Ooka T."/>
            <person name="Henderson I.R."/>
            <person name="Harris D."/>
            <person name="Asadulghani M."/>
            <person name="Kurokawa K."/>
            <person name="Dean P."/>
            <person name="Kenny B."/>
            <person name="Quail M.A."/>
            <person name="Thurston S."/>
            <person name="Dougan G."/>
            <person name="Hayashi T."/>
            <person name="Parkhill J."/>
            <person name="Frankel G."/>
        </authorList>
    </citation>
    <scope>NUCLEOTIDE SEQUENCE [LARGE SCALE GENOMIC DNA]</scope>
    <source>
        <strain>E2348/69 / EPEC</strain>
    </source>
</reference>
<name>MTLD_ECO27</name>
<dbReference type="EC" id="1.1.1.17" evidence="1"/>
<dbReference type="EMBL" id="FM180568">
    <property type="protein sequence ID" value="CAS11394.1"/>
    <property type="molecule type" value="Genomic_DNA"/>
</dbReference>
<dbReference type="RefSeq" id="WP_000645407.1">
    <property type="nucleotide sequence ID" value="NC_011601.1"/>
</dbReference>
<dbReference type="SMR" id="B7ULF5"/>
<dbReference type="KEGG" id="ecg:E2348C_3846"/>
<dbReference type="HOGENOM" id="CLU_036089_2_0_6"/>
<dbReference type="Proteomes" id="UP000008205">
    <property type="component" value="Chromosome"/>
</dbReference>
<dbReference type="GO" id="GO:0005829">
    <property type="term" value="C:cytosol"/>
    <property type="evidence" value="ECO:0007669"/>
    <property type="project" value="TreeGrafter"/>
</dbReference>
<dbReference type="GO" id="GO:0008926">
    <property type="term" value="F:mannitol-1-phosphate 5-dehydrogenase activity"/>
    <property type="evidence" value="ECO:0007669"/>
    <property type="project" value="UniProtKB-UniRule"/>
</dbReference>
<dbReference type="GO" id="GO:0019592">
    <property type="term" value="P:mannitol catabolic process"/>
    <property type="evidence" value="ECO:0007669"/>
    <property type="project" value="TreeGrafter"/>
</dbReference>
<dbReference type="FunFam" id="1.10.1040.10:FF:000009">
    <property type="entry name" value="Mannitol-1-phosphate 5-dehydrogenase"/>
    <property type="match status" value="1"/>
</dbReference>
<dbReference type="FunFam" id="3.40.50.720:FF:000075">
    <property type="entry name" value="Mannitol-1-phosphate 5-dehydrogenase"/>
    <property type="match status" value="1"/>
</dbReference>
<dbReference type="Gene3D" id="1.10.1040.10">
    <property type="entry name" value="N-(1-d-carboxylethyl)-l-norvaline Dehydrogenase, domain 2"/>
    <property type="match status" value="1"/>
</dbReference>
<dbReference type="Gene3D" id="3.40.50.720">
    <property type="entry name" value="NAD(P)-binding Rossmann-like Domain"/>
    <property type="match status" value="1"/>
</dbReference>
<dbReference type="HAMAP" id="MF_00196">
    <property type="entry name" value="Mannitol_dehydrog"/>
    <property type="match status" value="1"/>
</dbReference>
<dbReference type="InterPro" id="IPR008927">
    <property type="entry name" value="6-PGluconate_DH-like_C_sf"/>
</dbReference>
<dbReference type="InterPro" id="IPR013328">
    <property type="entry name" value="6PGD_dom2"/>
</dbReference>
<dbReference type="InterPro" id="IPR023028">
    <property type="entry name" value="Mannitol_1_phos_5_DH"/>
</dbReference>
<dbReference type="InterPro" id="IPR000669">
    <property type="entry name" value="Mannitol_DH"/>
</dbReference>
<dbReference type="InterPro" id="IPR013118">
    <property type="entry name" value="Mannitol_DH_C"/>
</dbReference>
<dbReference type="InterPro" id="IPR023027">
    <property type="entry name" value="Mannitol_DH_CS"/>
</dbReference>
<dbReference type="InterPro" id="IPR013131">
    <property type="entry name" value="Mannitol_DH_N"/>
</dbReference>
<dbReference type="InterPro" id="IPR036291">
    <property type="entry name" value="NAD(P)-bd_dom_sf"/>
</dbReference>
<dbReference type="NCBIfam" id="NF002646">
    <property type="entry name" value="PRK02318.1-2"/>
    <property type="match status" value="1"/>
</dbReference>
<dbReference type="NCBIfam" id="NF002647">
    <property type="entry name" value="PRK02318.1-3"/>
    <property type="match status" value="1"/>
</dbReference>
<dbReference type="NCBIfam" id="NF002648">
    <property type="entry name" value="PRK02318.1-4"/>
    <property type="match status" value="1"/>
</dbReference>
<dbReference type="NCBIfam" id="NF002650">
    <property type="entry name" value="PRK02318.2-2"/>
    <property type="match status" value="1"/>
</dbReference>
<dbReference type="NCBIfam" id="NF002652">
    <property type="entry name" value="PRK02318.2-5"/>
    <property type="match status" value="1"/>
</dbReference>
<dbReference type="PANTHER" id="PTHR30524:SF0">
    <property type="entry name" value="ALTRONATE OXIDOREDUCTASE-RELATED"/>
    <property type="match status" value="1"/>
</dbReference>
<dbReference type="PANTHER" id="PTHR30524">
    <property type="entry name" value="MANNITOL-1-PHOSPHATE 5-DEHYDROGENASE"/>
    <property type="match status" value="1"/>
</dbReference>
<dbReference type="Pfam" id="PF01232">
    <property type="entry name" value="Mannitol_dh"/>
    <property type="match status" value="1"/>
</dbReference>
<dbReference type="Pfam" id="PF08125">
    <property type="entry name" value="Mannitol_dh_C"/>
    <property type="match status" value="1"/>
</dbReference>
<dbReference type="PRINTS" id="PR00084">
    <property type="entry name" value="MTLDHDRGNASE"/>
</dbReference>
<dbReference type="SUPFAM" id="SSF48179">
    <property type="entry name" value="6-phosphogluconate dehydrogenase C-terminal domain-like"/>
    <property type="match status" value="1"/>
</dbReference>
<dbReference type="SUPFAM" id="SSF51735">
    <property type="entry name" value="NAD(P)-binding Rossmann-fold domains"/>
    <property type="match status" value="1"/>
</dbReference>
<dbReference type="PROSITE" id="PS00974">
    <property type="entry name" value="MANNITOL_DHGENASE"/>
    <property type="match status" value="1"/>
</dbReference>
<sequence length="382" mass="41182">MKALHFGAGNIGRGFIGKLLADAGIQLTFADVNQVVLDALNARHSYQVHVVGETEQVDTVSGVDAVSSIGDDVVDLIAQVDLVTTAVGPVVLERIAPAIAKGLVKRKEQGNESPLNIIACENMVRGTTQLKGHVMNALPEDAKAWVEEHVGFVDSAVDRIVPPSASATNDPLEVTVETFSEWIVDKTQFKGTLPNIPGMELTDNLMAFVERKLFTLNTGHAITAYLGKLAGHQTIRDAILDEKIRAVVKGAMEESGAVLIKRYGFDADKHAAYIQKILGRFENPYLKDDVERVGRQPLRKLSAGDRLIKPLLGTLEYGLPHKNLIEGIAAAMHFRSEDDPQAQELAALIADKGPQAALAQISGLDANNEVVSEAVTAYKAMQ</sequence>
<feature type="chain" id="PRO_1000124387" description="Mannitol-1-phosphate 5-dehydrogenase">
    <location>
        <begin position="1"/>
        <end position="382"/>
    </location>
</feature>
<feature type="binding site" evidence="1">
    <location>
        <begin position="3"/>
        <end position="14"/>
    </location>
    <ligand>
        <name>NAD(+)</name>
        <dbReference type="ChEBI" id="CHEBI:57540"/>
    </ligand>
</feature>
<feature type="modified residue" description="N6-acetyllysine" evidence="1">
    <location>
        <position position="269"/>
    </location>
</feature>